<reference key="1">
    <citation type="submission" date="2005-01" db="EMBL/GenBank/DDBJ databases">
        <title>The sequence of Magnaporthe grisea chromosome 7.</title>
        <authorList>
            <person name="Thon M.R."/>
            <person name="Pan H."/>
            <person name="Diener A."/>
            <person name="Papalas J."/>
            <person name="Taro A."/>
            <person name="Mitchell T.K."/>
            <person name="Dean R.A."/>
        </authorList>
    </citation>
    <scope>NUCLEOTIDE SEQUENCE [LARGE SCALE GENOMIC DNA]</scope>
    <source>
        <strain>70-15 / ATCC MYA-4617 / FGSC 8958</strain>
    </source>
</reference>
<reference key="2">
    <citation type="journal article" date="2005" name="Nature">
        <title>The genome sequence of the rice blast fungus Magnaporthe grisea.</title>
        <authorList>
            <person name="Dean R.A."/>
            <person name="Talbot N.J."/>
            <person name="Ebbole D.J."/>
            <person name="Farman M.L."/>
            <person name="Mitchell T.K."/>
            <person name="Orbach M.J."/>
            <person name="Thon M.R."/>
            <person name="Kulkarni R."/>
            <person name="Xu J.-R."/>
            <person name="Pan H."/>
            <person name="Read N.D."/>
            <person name="Lee Y.-H."/>
            <person name="Carbone I."/>
            <person name="Brown D."/>
            <person name="Oh Y.Y."/>
            <person name="Donofrio N."/>
            <person name="Jeong J.S."/>
            <person name="Soanes D.M."/>
            <person name="Djonovic S."/>
            <person name="Kolomiets E."/>
            <person name="Rehmeyer C."/>
            <person name="Li W."/>
            <person name="Harding M."/>
            <person name="Kim S."/>
            <person name="Lebrun M.-H."/>
            <person name="Bohnert H."/>
            <person name="Coughlan S."/>
            <person name="Butler J."/>
            <person name="Calvo S.E."/>
            <person name="Ma L.-J."/>
            <person name="Nicol R."/>
            <person name="Purcell S."/>
            <person name="Nusbaum C."/>
            <person name="Galagan J.E."/>
            <person name="Birren B.W."/>
        </authorList>
    </citation>
    <scope>NUCLEOTIDE SEQUENCE [LARGE SCALE GENOMIC DNA]</scope>
    <source>
        <strain>70-15 / ATCC MYA-4617 / FGSC 8958</strain>
    </source>
</reference>
<name>COQ4_PYRO7</name>
<dbReference type="EC" id="4.1.1.130" evidence="1"/>
<dbReference type="EMBL" id="CM000230">
    <property type="protein sequence ID" value="EAQ71080.1"/>
    <property type="molecule type" value="Genomic_DNA"/>
</dbReference>
<dbReference type="EMBL" id="CM001237">
    <property type="protein sequence ID" value="EHA46274.1"/>
    <property type="molecule type" value="Genomic_DNA"/>
</dbReference>
<dbReference type="RefSeq" id="XP_003721017.1">
    <property type="nucleotide sequence ID" value="XM_003720969.1"/>
</dbReference>
<dbReference type="SMR" id="A4RBZ3"/>
<dbReference type="FunCoup" id="A4RBZ3">
    <property type="interactions" value="535"/>
</dbReference>
<dbReference type="STRING" id="242507.A4RBZ3"/>
<dbReference type="EnsemblFungi" id="MGG_02739T0">
    <property type="protein sequence ID" value="MGG_02739T0"/>
    <property type="gene ID" value="MGG_02739"/>
</dbReference>
<dbReference type="GeneID" id="2682721"/>
<dbReference type="KEGG" id="mgr:MGG_02739"/>
<dbReference type="VEuPathDB" id="FungiDB:MGG_02739"/>
<dbReference type="eggNOG" id="KOG3244">
    <property type="taxonomic scope" value="Eukaryota"/>
</dbReference>
<dbReference type="HOGENOM" id="CLU_061241_0_0_1"/>
<dbReference type="InParanoid" id="A4RBZ3"/>
<dbReference type="OMA" id="YYERHFH"/>
<dbReference type="OrthoDB" id="4249at2759"/>
<dbReference type="UniPathway" id="UPA00232"/>
<dbReference type="Proteomes" id="UP000009058">
    <property type="component" value="Chromosome 7"/>
</dbReference>
<dbReference type="GO" id="GO:0031314">
    <property type="term" value="C:extrinsic component of mitochondrial inner membrane"/>
    <property type="evidence" value="ECO:0007669"/>
    <property type="project" value="UniProtKB-UniRule"/>
</dbReference>
<dbReference type="GO" id="GO:0006744">
    <property type="term" value="P:ubiquinone biosynthetic process"/>
    <property type="evidence" value="ECO:0007669"/>
    <property type="project" value="UniProtKB-UniRule"/>
</dbReference>
<dbReference type="HAMAP" id="MF_03111">
    <property type="entry name" value="Coq4"/>
    <property type="match status" value="1"/>
</dbReference>
<dbReference type="InterPro" id="IPR007715">
    <property type="entry name" value="Coq4"/>
</dbReference>
<dbReference type="InterPro" id="IPR027540">
    <property type="entry name" value="Coq4_euk"/>
</dbReference>
<dbReference type="PANTHER" id="PTHR12922">
    <property type="entry name" value="UBIQUINONE BIOSYNTHESIS PROTEIN"/>
    <property type="match status" value="1"/>
</dbReference>
<dbReference type="PANTHER" id="PTHR12922:SF7">
    <property type="entry name" value="UBIQUINONE BIOSYNTHESIS PROTEIN COQ4 HOMOLOG, MITOCHONDRIAL"/>
    <property type="match status" value="1"/>
</dbReference>
<dbReference type="Pfam" id="PF05019">
    <property type="entry name" value="Coq4"/>
    <property type="match status" value="1"/>
</dbReference>
<sequence>MNSSPARAVRALVQSQSRQRPTLERACLSCATVVHARRCFSVLDRPPPNYPGHVPLTRVERAGLAVGSGLWSLLDPRRGDLIAAFAEATATPYFVPRLRDAMLASPTGRRILRDRPRITSSSLDLPRLRSLPQGTVGATYVAWLDREGVTPDTRAHVRYVDDEECAYVLQRYRESHDFYHALTALPVVREGEVALKAFEFANTLLPMTGLATFAAFTLREGERRRFVDTYLPWAVKNGLRAKEIINVYWEEEMETDVVDLRKALGIEPPPDMRDARKRERDARRRRKQLETEAQQGLDAASL</sequence>
<organism>
    <name type="scientific">Pyricularia oryzae (strain 70-15 / ATCC MYA-4617 / FGSC 8958)</name>
    <name type="common">Rice blast fungus</name>
    <name type="synonym">Magnaporthe oryzae</name>
    <dbReference type="NCBI Taxonomy" id="242507"/>
    <lineage>
        <taxon>Eukaryota</taxon>
        <taxon>Fungi</taxon>
        <taxon>Dikarya</taxon>
        <taxon>Ascomycota</taxon>
        <taxon>Pezizomycotina</taxon>
        <taxon>Sordariomycetes</taxon>
        <taxon>Sordariomycetidae</taxon>
        <taxon>Magnaporthales</taxon>
        <taxon>Pyriculariaceae</taxon>
        <taxon>Pyricularia</taxon>
    </lineage>
</organism>
<protein>
    <recommendedName>
        <fullName evidence="1">Ubiquinone biosynthesis protein COQ4, mitochondrial</fullName>
    </recommendedName>
    <alternativeName>
        <fullName>4-hydroxy-3-methoxy-5-polyprenylbenzoate decarboxylase</fullName>
        <ecNumber evidence="1">4.1.1.130</ecNumber>
    </alternativeName>
    <alternativeName>
        <fullName evidence="1">Coenzyme Q biosynthesis protein 4</fullName>
    </alternativeName>
</protein>
<keyword id="KW-0456">Lyase</keyword>
<keyword id="KW-0472">Membrane</keyword>
<keyword id="KW-0479">Metal-binding</keyword>
<keyword id="KW-0496">Mitochondrion</keyword>
<keyword id="KW-0999">Mitochondrion inner membrane</keyword>
<keyword id="KW-1185">Reference proteome</keyword>
<keyword id="KW-0809">Transit peptide</keyword>
<keyword id="KW-0831">Ubiquinone biosynthesis</keyword>
<keyword id="KW-0862">Zinc</keyword>
<evidence type="ECO:0000255" key="1">
    <source>
        <dbReference type="HAMAP-Rule" id="MF_03111"/>
    </source>
</evidence>
<evidence type="ECO:0000256" key="2">
    <source>
        <dbReference type="SAM" id="MobiDB-lite"/>
    </source>
</evidence>
<comment type="function">
    <text evidence="1">Lyase that catalyzes the C1-decarboxylation of 4-hydroxy-3-methoxy-5-(all-trans-polyprenyl)benzoic acid into 2-methoxy-6-(all-trans-polyprenyl)phenol during ubiquinone biosynthesis.</text>
</comment>
<comment type="catalytic activity">
    <reaction evidence="1">
        <text>a 4-hydroxy-3-methoxy-5-(all-trans-polyprenyl)benzoate + H(+) = a 2-methoxy-6-(all-trans-polyprenyl)phenol + CO2</text>
        <dbReference type="Rhea" id="RHEA:81179"/>
        <dbReference type="Rhea" id="RHEA-COMP:9551"/>
        <dbReference type="Rhea" id="RHEA-COMP:10931"/>
        <dbReference type="ChEBI" id="CHEBI:15378"/>
        <dbReference type="ChEBI" id="CHEBI:16526"/>
        <dbReference type="ChEBI" id="CHEBI:62731"/>
        <dbReference type="ChEBI" id="CHEBI:84443"/>
        <dbReference type="EC" id="4.1.1.130"/>
    </reaction>
</comment>
<comment type="cofactor">
    <cofactor evidence="1">
        <name>Zn(2+)</name>
        <dbReference type="ChEBI" id="CHEBI:29105"/>
    </cofactor>
</comment>
<comment type="pathway">
    <text evidence="1">Cofactor biosynthesis; ubiquinone biosynthesis.</text>
</comment>
<comment type="subunit">
    <text evidence="1">Component of a multi-subunit COQ enzyme complex, composed of at least COQ3, COQ4, COQ5, COQ6, COQ7 and COQ9.</text>
</comment>
<comment type="subcellular location">
    <subcellularLocation>
        <location evidence="1">Mitochondrion inner membrane</location>
        <topology evidence="1">Peripheral membrane protein</topology>
        <orientation evidence="1">Matrix side</orientation>
    </subcellularLocation>
</comment>
<comment type="similarity">
    <text evidence="1">Belongs to the COQ4 family.</text>
</comment>
<proteinExistence type="inferred from homology"/>
<gene>
    <name evidence="1" type="primary">COQ4</name>
    <name type="ORF">MGCH7_ch7g487</name>
    <name type="ORF">MGG_02739</name>
</gene>
<feature type="transit peptide" description="Mitochondrion" evidence="1">
    <location>
        <begin position="1"/>
        <end position="19"/>
    </location>
</feature>
<feature type="chain" id="PRO_0000388119" description="Ubiquinone biosynthesis protein COQ4, mitochondrial">
    <location>
        <begin position="20"/>
        <end position="302"/>
    </location>
</feature>
<feature type="region of interest" description="Disordered" evidence="2">
    <location>
        <begin position="268"/>
        <end position="302"/>
    </location>
</feature>
<feature type="compositionally biased region" description="Basic and acidic residues" evidence="2">
    <location>
        <begin position="268"/>
        <end position="282"/>
    </location>
</feature>
<feature type="binding site" evidence="1">
    <location>
        <position position="176"/>
    </location>
    <ligand>
        <name>Zn(2+)</name>
        <dbReference type="ChEBI" id="CHEBI:29105"/>
    </ligand>
</feature>
<feature type="binding site" evidence="1">
    <location>
        <position position="177"/>
    </location>
    <ligand>
        <name>Zn(2+)</name>
        <dbReference type="ChEBI" id="CHEBI:29105"/>
    </ligand>
</feature>
<feature type="binding site" evidence="1">
    <location>
        <position position="180"/>
    </location>
    <ligand>
        <name>Zn(2+)</name>
        <dbReference type="ChEBI" id="CHEBI:29105"/>
    </ligand>
</feature>
<feature type="binding site" evidence="1">
    <location>
        <position position="192"/>
    </location>
    <ligand>
        <name>Zn(2+)</name>
        <dbReference type="ChEBI" id="CHEBI:29105"/>
    </ligand>
</feature>
<accession>A4RBZ3</accession>
<accession>G4NJ58</accession>
<accession>Q2KG48</accession>